<reference key="1">
    <citation type="journal article" date="2004" name="Nature">
        <title>Genome evolution in yeasts.</title>
        <authorList>
            <person name="Dujon B."/>
            <person name="Sherman D."/>
            <person name="Fischer G."/>
            <person name="Durrens P."/>
            <person name="Casaregola S."/>
            <person name="Lafontaine I."/>
            <person name="de Montigny J."/>
            <person name="Marck C."/>
            <person name="Neuveglise C."/>
            <person name="Talla E."/>
            <person name="Goffard N."/>
            <person name="Frangeul L."/>
            <person name="Aigle M."/>
            <person name="Anthouard V."/>
            <person name="Babour A."/>
            <person name="Barbe V."/>
            <person name="Barnay S."/>
            <person name="Blanchin S."/>
            <person name="Beckerich J.-M."/>
            <person name="Beyne E."/>
            <person name="Bleykasten C."/>
            <person name="Boisrame A."/>
            <person name="Boyer J."/>
            <person name="Cattolico L."/>
            <person name="Confanioleri F."/>
            <person name="de Daruvar A."/>
            <person name="Despons L."/>
            <person name="Fabre E."/>
            <person name="Fairhead C."/>
            <person name="Ferry-Dumazet H."/>
            <person name="Groppi A."/>
            <person name="Hantraye F."/>
            <person name="Hennequin C."/>
            <person name="Jauniaux N."/>
            <person name="Joyet P."/>
            <person name="Kachouri R."/>
            <person name="Kerrest A."/>
            <person name="Koszul R."/>
            <person name="Lemaire M."/>
            <person name="Lesur I."/>
            <person name="Ma L."/>
            <person name="Muller H."/>
            <person name="Nicaud J.-M."/>
            <person name="Nikolski M."/>
            <person name="Oztas S."/>
            <person name="Ozier-Kalogeropoulos O."/>
            <person name="Pellenz S."/>
            <person name="Potier S."/>
            <person name="Richard G.-F."/>
            <person name="Straub M.-L."/>
            <person name="Suleau A."/>
            <person name="Swennen D."/>
            <person name="Tekaia F."/>
            <person name="Wesolowski-Louvel M."/>
            <person name="Westhof E."/>
            <person name="Wirth B."/>
            <person name="Zeniou-Meyer M."/>
            <person name="Zivanovic Y."/>
            <person name="Bolotin-Fukuhara M."/>
            <person name="Thierry A."/>
            <person name="Bouchier C."/>
            <person name="Caudron B."/>
            <person name="Scarpelli C."/>
            <person name="Gaillardin C."/>
            <person name="Weissenbach J."/>
            <person name="Wincker P."/>
            <person name="Souciet J.-L."/>
        </authorList>
    </citation>
    <scope>NUCLEOTIDE SEQUENCE [LARGE SCALE GENOMIC DNA]</scope>
    <source>
        <strain>ATCC 36239 / CBS 767 / BCRC 21394 / JCM 1990 / NBRC 0083 / IGC 2968</strain>
    </source>
</reference>
<gene>
    <name type="primary">FYV7</name>
    <name type="ordered locus">DEHA2E13354g</name>
</gene>
<feature type="chain" id="PRO_0000087401" description="rRNA-processing protein FYV7">
    <location>
        <begin position="1"/>
        <end position="157"/>
    </location>
</feature>
<feature type="region of interest" description="Disordered" evidence="3">
    <location>
        <begin position="1"/>
        <end position="23"/>
    </location>
</feature>
<feature type="region of interest" description="Disordered" evidence="3">
    <location>
        <begin position="44"/>
        <end position="157"/>
    </location>
</feature>
<feature type="coiled-coil region" evidence="2">
    <location>
        <begin position="106"/>
        <end position="135"/>
    </location>
</feature>
<feature type="compositionally biased region" description="Basic and acidic residues" evidence="3">
    <location>
        <begin position="13"/>
        <end position="23"/>
    </location>
</feature>
<feature type="compositionally biased region" description="Basic and acidic residues" evidence="3">
    <location>
        <begin position="63"/>
        <end position="75"/>
    </location>
</feature>
<feature type="compositionally biased region" description="Basic and acidic residues" evidence="3">
    <location>
        <begin position="89"/>
        <end position="131"/>
    </location>
</feature>
<proteinExistence type="inferred from homology"/>
<evidence type="ECO:0000250" key="1"/>
<evidence type="ECO:0000255" key="2"/>
<evidence type="ECO:0000256" key="3">
    <source>
        <dbReference type="SAM" id="MobiDB-lite"/>
    </source>
</evidence>
<evidence type="ECO:0000305" key="4"/>
<name>FYV7_DEBHA</name>
<organism>
    <name type="scientific">Debaryomyces hansenii (strain ATCC 36239 / CBS 767 / BCRC 21394 / JCM 1990 / NBRC 0083 / IGC 2968)</name>
    <name type="common">Yeast</name>
    <name type="synonym">Torulaspora hansenii</name>
    <dbReference type="NCBI Taxonomy" id="284592"/>
    <lineage>
        <taxon>Eukaryota</taxon>
        <taxon>Fungi</taxon>
        <taxon>Dikarya</taxon>
        <taxon>Ascomycota</taxon>
        <taxon>Saccharomycotina</taxon>
        <taxon>Pichiomycetes</taxon>
        <taxon>Debaryomycetaceae</taxon>
        <taxon>Debaryomyces</taxon>
    </lineage>
</organism>
<accession>Q6BPI5</accession>
<dbReference type="EMBL" id="CR382137">
    <property type="protein sequence ID" value="CAG88126.2"/>
    <property type="molecule type" value="Genomic_DNA"/>
</dbReference>
<dbReference type="RefSeq" id="XP_459885.2">
    <property type="nucleotide sequence ID" value="XM_459885.2"/>
</dbReference>
<dbReference type="FunCoup" id="Q6BPI5">
    <property type="interactions" value="100"/>
</dbReference>
<dbReference type="STRING" id="284592.Q6BPI5"/>
<dbReference type="GeneID" id="2902766"/>
<dbReference type="KEGG" id="dha:DEHA2E13354g"/>
<dbReference type="VEuPathDB" id="FungiDB:DEHA2E13354g"/>
<dbReference type="eggNOG" id="KOG4851">
    <property type="taxonomic scope" value="Eukaryota"/>
</dbReference>
<dbReference type="HOGENOM" id="CLU_105541_0_0_1"/>
<dbReference type="InParanoid" id="Q6BPI5"/>
<dbReference type="OMA" id="MGPKIDD"/>
<dbReference type="OrthoDB" id="2135053at2759"/>
<dbReference type="Proteomes" id="UP000000599">
    <property type="component" value="Chromosome E"/>
</dbReference>
<dbReference type="GO" id="GO:0005730">
    <property type="term" value="C:nucleolus"/>
    <property type="evidence" value="ECO:0007669"/>
    <property type="project" value="UniProtKB-SubCell"/>
</dbReference>
<dbReference type="GO" id="GO:0006364">
    <property type="term" value="P:rRNA processing"/>
    <property type="evidence" value="ECO:0007669"/>
    <property type="project" value="UniProtKB-KW"/>
</dbReference>
<dbReference type="InterPro" id="IPR013730">
    <property type="entry name" value="Fyv7/TAP26"/>
</dbReference>
<dbReference type="InterPro" id="IPR017265">
    <property type="entry name" value="Fyv7_fungi"/>
</dbReference>
<dbReference type="Pfam" id="PF08524">
    <property type="entry name" value="rRNA_processing"/>
    <property type="match status" value="1"/>
</dbReference>
<dbReference type="PIRSF" id="PIRSF037708">
    <property type="entry name" value="rRNA_proc_FYV7"/>
    <property type="match status" value="1"/>
</dbReference>
<sequence>MGDKKQFRGKNPYTDRREFKSKEIKKSLVHRARLRKNYFKLLEKEGINHEPEQNGDESAESQNKSEEFKRSHIPDSRNQPSKRPMNFAERAKIAKERKEHSRQAKLKSIQDRRETIEKKSKERERRKDNLSKKTKSGQPLMGPRINNLLDKIKKDIE</sequence>
<comment type="function">
    <text evidence="1">Involved in the processing of the 20S pre-rRNA.</text>
</comment>
<comment type="subcellular location">
    <subcellularLocation>
        <location evidence="1">Nucleus</location>
        <location evidence="1">Nucleolus</location>
    </subcellularLocation>
</comment>
<comment type="similarity">
    <text evidence="4">Belongs to the FYV7 family.</text>
</comment>
<keyword id="KW-0175">Coiled coil</keyword>
<keyword id="KW-0539">Nucleus</keyword>
<keyword id="KW-1185">Reference proteome</keyword>
<keyword id="KW-0698">rRNA processing</keyword>
<protein>
    <recommendedName>
        <fullName>rRNA-processing protein FYV7</fullName>
    </recommendedName>
</protein>